<protein>
    <recommendedName>
        <fullName evidence="1">Putative cysteine ligase BshC</fullName>
        <ecNumber evidence="1">6.-.-.-</ecNumber>
    </recommendedName>
</protein>
<comment type="similarity">
    <text evidence="1">Belongs to the BshC family.</text>
</comment>
<gene>
    <name evidence="1" type="primary">bshC</name>
    <name type="ordered locus">Acid_7134</name>
</gene>
<organism>
    <name type="scientific">Solibacter usitatus (strain Ellin6076)</name>
    <dbReference type="NCBI Taxonomy" id="234267"/>
    <lineage>
        <taxon>Bacteria</taxon>
        <taxon>Pseudomonadati</taxon>
        <taxon>Acidobacteriota</taxon>
        <taxon>Terriglobia</taxon>
        <taxon>Bryobacterales</taxon>
        <taxon>Solibacteraceae</taxon>
        <taxon>Candidatus Solibacter</taxon>
    </lineage>
</organism>
<accession>Q01QM5</accession>
<name>BSHC_SOLUE</name>
<evidence type="ECO:0000255" key="1">
    <source>
        <dbReference type="HAMAP-Rule" id="MF_01867"/>
    </source>
</evidence>
<proteinExistence type="inferred from homology"/>
<keyword id="KW-0175">Coiled coil</keyword>
<keyword id="KW-0436">Ligase</keyword>
<reference key="1">
    <citation type="journal article" date="2009" name="Appl. Environ. Microbiol.">
        <title>Three genomes from the phylum Acidobacteria provide insight into the lifestyles of these microorganisms in soils.</title>
        <authorList>
            <person name="Ward N.L."/>
            <person name="Challacombe J.F."/>
            <person name="Janssen P.H."/>
            <person name="Henrissat B."/>
            <person name="Coutinho P.M."/>
            <person name="Wu M."/>
            <person name="Xie G."/>
            <person name="Haft D.H."/>
            <person name="Sait M."/>
            <person name="Badger J."/>
            <person name="Barabote R.D."/>
            <person name="Bradley B."/>
            <person name="Brettin T.S."/>
            <person name="Brinkac L.M."/>
            <person name="Bruce D."/>
            <person name="Creasy T."/>
            <person name="Daugherty S.C."/>
            <person name="Davidsen T.M."/>
            <person name="DeBoy R.T."/>
            <person name="Detter J.C."/>
            <person name="Dodson R.J."/>
            <person name="Durkin A.S."/>
            <person name="Ganapathy A."/>
            <person name="Gwinn-Giglio M."/>
            <person name="Han C.S."/>
            <person name="Khouri H."/>
            <person name="Kiss H."/>
            <person name="Kothari S.P."/>
            <person name="Madupu R."/>
            <person name="Nelson K.E."/>
            <person name="Nelson W.C."/>
            <person name="Paulsen I."/>
            <person name="Penn K."/>
            <person name="Ren Q."/>
            <person name="Rosovitz M.J."/>
            <person name="Selengut J.D."/>
            <person name="Shrivastava S."/>
            <person name="Sullivan S.A."/>
            <person name="Tapia R."/>
            <person name="Thompson L.S."/>
            <person name="Watkins K.L."/>
            <person name="Yang Q."/>
            <person name="Yu C."/>
            <person name="Zafar N."/>
            <person name="Zhou L."/>
            <person name="Kuske C.R."/>
        </authorList>
    </citation>
    <scope>NUCLEOTIDE SEQUENCE [LARGE SCALE GENOMIC DNA]</scope>
    <source>
        <strain>Ellin6076</strain>
    </source>
</reference>
<feature type="chain" id="PRO_0000378251" description="Putative cysteine ligase BshC">
    <location>
        <begin position="1"/>
        <end position="524"/>
    </location>
</feature>
<feature type="coiled-coil region" evidence="1">
    <location>
        <begin position="437"/>
        <end position="457"/>
    </location>
</feature>
<dbReference type="EC" id="6.-.-.-" evidence="1"/>
<dbReference type="EMBL" id="CP000473">
    <property type="protein sequence ID" value="ABJ88045.1"/>
    <property type="molecule type" value="Genomic_DNA"/>
</dbReference>
<dbReference type="SMR" id="Q01QM5"/>
<dbReference type="STRING" id="234267.Acid_7134"/>
<dbReference type="KEGG" id="sus:Acid_7134"/>
<dbReference type="eggNOG" id="COG4365">
    <property type="taxonomic scope" value="Bacteria"/>
</dbReference>
<dbReference type="HOGENOM" id="CLU_022249_1_0_0"/>
<dbReference type="InParanoid" id="Q01QM5"/>
<dbReference type="OrthoDB" id="9765151at2"/>
<dbReference type="GO" id="GO:0016874">
    <property type="term" value="F:ligase activity"/>
    <property type="evidence" value="ECO:0007669"/>
    <property type="project" value="UniProtKB-UniRule"/>
</dbReference>
<dbReference type="HAMAP" id="MF_01867">
    <property type="entry name" value="BshC"/>
    <property type="match status" value="1"/>
</dbReference>
<dbReference type="InterPro" id="IPR011199">
    <property type="entry name" value="Bacillithiol_biosynth_BshC"/>
</dbReference>
<dbReference type="InterPro" id="IPR055399">
    <property type="entry name" value="CC_BshC"/>
</dbReference>
<dbReference type="InterPro" id="IPR055398">
    <property type="entry name" value="Rossmann-like_BshC"/>
</dbReference>
<dbReference type="NCBIfam" id="TIGR03998">
    <property type="entry name" value="thiol_BshC"/>
    <property type="match status" value="1"/>
</dbReference>
<dbReference type="Pfam" id="PF24850">
    <property type="entry name" value="CC_BshC"/>
    <property type="match status" value="1"/>
</dbReference>
<dbReference type="Pfam" id="PF10079">
    <property type="entry name" value="Rossmann-like_BshC"/>
    <property type="match status" value="1"/>
</dbReference>
<dbReference type="PIRSF" id="PIRSF012535">
    <property type="entry name" value="UCP012535"/>
    <property type="match status" value="1"/>
</dbReference>
<sequence>MHCTCVRQSDLPNTTRLFADVLYHPDKTADFYQYPLRNLEAYQAAAAAIDFTPERRAALIAALRVQNPESPALSRLAEPGTVAVVTGQQVGLFSGPSYTIYKVLHAVKLAKWLSDNGTPAVPLFWLATEDHDFAEVNHVWVFDSHHHPRKLEMRRTALEQPVGSVTLAAPPVPELRATLHGLPFGEEVADLVEETYRAGSTMGKSFAELLRRLLAQFDIPYVDPMLPAFRELAAPALRSAVEAAPDLTSQLLQRNRELSDAGYHSQVHVEDHTSLVFLLENGKRLNLRRAGNEYVHNSRRFTAAELMDRAASLSPNAILRPVIQDSMLPTVAYIGGPAEIAYFAQSQVLYRTLLGRMPIAAPRTGYTILDSRSAKLMNRYGLEVTDFFHGETPLKERLASRLVPPRLGDTVRATTATVESAVGRLRAELAAFDPTLAQALDRSARKINYQIEKMERKTAREAMRRDARAASDAESLCGLIYPERHLQERLYSILPFLAKHGLDLPARIYDSIELECTDHRVMVV</sequence>